<name>SECA_PROMP</name>
<evidence type="ECO:0000255" key="1">
    <source>
        <dbReference type="HAMAP-Rule" id="MF_01382"/>
    </source>
</evidence>
<evidence type="ECO:0000256" key="2">
    <source>
        <dbReference type="SAM" id="MobiDB-lite"/>
    </source>
</evidence>
<comment type="function">
    <text evidence="1">Part of the Sec protein translocase complex. Interacts with the SecYEG preprotein conducting channel. Has a central role in coupling the hydrolysis of ATP to the transfer of proteins into and across the cell membrane, serving as an ATP-driven molecular motor driving the stepwise translocation of polypeptide chains across the membrane.</text>
</comment>
<comment type="function">
    <text evidence="1">Probably participates in protein translocation into and across both the cytoplasmic and thylakoid membranes in cyanobacterial cells.</text>
</comment>
<comment type="catalytic activity">
    <reaction evidence="1">
        <text>ATP + H2O + cellular proteinSide 1 = ADP + phosphate + cellular proteinSide 2.</text>
        <dbReference type="EC" id="7.4.2.8"/>
    </reaction>
</comment>
<comment type="subunit">
    <text evidence="1">Monomer and homodimer. Part of the essential Sec protein translocation apparatus which comprises SecA, SecYEG and auxiliary proteins SecDF. Other proteins may also be involved.</text>
</comment>
<comment type="subcellular location">
    <subcellularLocation>
        <location evidence="1">Cell inner membrane</location>
        <topology evidence="1">Peripheral membrane protein</topology>
        <orientation evidence="1">Cytoplasmic side</orientation>
    </subcellularLocation>
    <subcellularLocation>
        <location evidence="1">Cellular thylakoid membrane</location>
        <topology evidence="1">Peripheral membrane protein</topology>
        <orientation evidence="1">Cytoplasmic side</orientation>
    </subcellularLocation>
    <subcellularLocation>
        <location evidence="1">Cytoplasm</location>
    </subcellularLocation>
</comment>
<comment type="similarity">
    <text evidence="1">Belongs to the SecA family.</text>
</comment>
<sequence>MLKLLLGDPNTRKLKRYQPMVEEINLLEEDVSILTDDELRNETHNLKSNISSELNIKKQKELLEETLPKAFAIVREASKRVLEMRHFDVQLIGGMVLHEGQIAEMKTGEGKTLVATLPCYLNALTGKGVHVVTVNDYLARRDAEWMGQVHRFLGLSVGLIQQDMSPAERKKNYACDITYATNSELGFDYLRDNMATEIEEVVQRKFNYCVIDEVDSILIDEARTPLIISGQIERPQEKYQKAAELSLSLIKAKELSKDGIDPEGDYEVDEKQRSCILTDQGFAKCEEALKVNDLYDPKDPWAHYITNALKAKELFVKDVNYIIKKDEAVIVDEFTGRVMPGRRWSDGQHQAIEAKEGLKIQPETQTLASITYQNFFLLYPGLAGMTGTAKTEEVEFEKTYKLESTVVPTNQIRKRQDWADQVFKTELGKWKAVANETAEIHRNGRPVLVGTTSVEKSELLSSLLFEQQIPHNLLNAKPENVEREAEIVAQAGRSGAVTIATNMAGRGTDIILGGNSDYMARLKLKETLMPLLVKPDNEHKPPIPQQRNSKSGGGFSANVDSIANKNTKSGVDSLFPCQLGEDIKRKLSLLSNELVKNWGDRSLTILELDDKIATAAEKAPTEDKLIQSLRESLSEVKNEYEKVLIHEEENVRNAGGLHVIGTERHESRRVDNQLRGRAGRQGDLGSTRFFLSLEDNLLRIFGGDRVANLMNAFRVDEDMPIESGMLTRSLESAQKKVETYYYDIRKQVFEYDEVMNNQRKAVYNERLRVLKGNDLKKQVIGYGERTMEEIVEAYINPDLPPEEWDIDQLISKVKEFIYLLNDLKSEDVSVLSIEELKNYLQEQLRIAYDLKEAQIEKFRPGLMREAERFFILQQIDNLWREHLQSMDSLRESVGLRGYGQKDPLIEYKNEGYDMFLEMMTNMRRNVIYSMFMFQPKSEKVTNN</sequence>
<dbReference type="EC" id="7.4.2.8" evidence="1"/>
<dbReference type="EMBL" id="BX548174">
    <property type="protein sequence ID" value="CAE20098.1"/>
    <property type="molecule type" value="Genomic_DNA"/>
</dbReference>
<dbReference type="SMR" id="Q7UZM1"/>
<dbReference type="STRING" id="59919.PMM1639"/>
<dbReference type="KEGG" id="pmm:PMM1639"/>
<dbReference type="eggNOG" id="COG0653">
    <property type="taxonomic scope" value="Bacteria"/>
</dbReference>
<dbReference type="HOGENOM" id="CLU_005314_3_0_3"/>
<dbReference type="Proteomes" id="UP000001026">
    <property type="component" value="Chromosome"/>
</dbReference>
<dbReference type="GO" id="GO:0031522">
    <property type="term" value="C:cell envelope Sec protein transport complex"/>
    <property type="evidence" value="ECO:0007669"/>
    <property type="project" value="TreeGrafter"/>
</dbReference>
<dbReference type="GO" id="GO:0005829">
    <property type="term" value="C:cytosol"/>
    <property type="evidence" value="ECO:0007669"/>
    <property type="project" value="TreeGrafter"/>
</dbReference>
<dbReference type="GO" id="GO:0031676">
    <property type="term" value="C:plasma membrane-derived thylakoid membrane"/>
    <property type="evidence" value="ECO:0007669"/>
    <property type="project" value="UniProtKB-SubCell"/>
</dbReference>
<dbReference type="GO" id="GO:0005524">
    <property type="term" value="F:ATP binding"/>
    <property type="evidence" value="ECO:0007669"/>
    <property type="project" value="UniProtKB-UniRule"/>
</dbReference>
<dbReference type="GO" id="GO:0008564">
    <property type="term" value="F:protein-exporting ATPase activity"/>
    <property type="evidence" value="ECO:0007669"/>
    <property type="project" value="UniProtKB-EC"/>
</dbReference>
<dbReference type="GO" id="GO:0065002">
    <property type="term" value="P:intracellular protein transmembrane transport"/>
    <property type="evidence" value="ECO:0007669"/>
    <property type="project" value="UniProtKB-UniRule"/>
</dbReference>
<dbReference type="GO" id="GO:0017038">
    <property type="term" value="P:protein import"/>
    <property type="evidence" value="ECO:0007669"/>
    <property type="project" value="InterPro"/>
</dbReference>
<dbReference type="GO" id="GO:0006605">
    <property type="term" value="P:protein targeting"/>
    <property type="evidence" value="ECO:0007669"/>
    <property type="project" value="UniProtKB-UniRule"/>
</dbReference>
<dbReference type="GO" id="GO:0043952">
    <property type="term" value="P:protein transport by the Sec complex"/>
    <property type="evidence" value="ECO:0007669"/>
    <property type="project" value="TreeGrafter"/>
</dbReference>
<dbReference type="CDD" id="cd17928">
    <property type="entry name" value="DEXDc_SecA"/>
    <property type="match status" value="1"/>
</dbReference>
<dbReference type="CDD" id="cd18803">
    <property type="entry name" value="SF2_C_secA"/>
    <property type="match status" value="1"/>
</dbReference>
<dbReference type="FunFam" id="3.90.1440.10:FF:000003">
    <property type="entry name" value="Preprotein translocase SecA subunit"/>
    <property type="match status" value="1"/>
</dbReference>
<dbReference type="FunFam" id="3.40.50.300:FF:000429">
    <property type="entry name" value="Preprotein translocase subunit SecA"/>
    <property type="match status" value="1"/>
</dbReference>
<dbReference type="FunFam" id="1.10.3060.10:FF:000003">
    <property type="entry name" value="Protein translocase subunit SecA"/>
    <property type="match status" value="1"/>
</dbReference>
<dbReference type="FunFam" id="3.40.50.300:FF:000334">
    <property type="entry name" value="Protein translocase subunit SecA"/>
    <property type="match status" value="1"/>
</dbReference>
<dbReference type="Gene3D" id="1.10.3060.10">
    <property type="entry name" value="Helical scaffold and wing domains of SecA"/>
    <property type="match status" value="1"/>
</dbReference>
<dbReference type="Gene3D" id="3.40.50.300">
    <property type="entry name" value="P-loop containing nucleotide triphosphate hydrolases"/>
    <property type="match status" value="2"/>
</dbReference>
<dbReference type="Gene3D" id="3.90.1440.10">
    <property type="entry name" value="SecA, preprotein cross-linking domain"/>
    <property type="match status" value="1"/>
</dbReference>
<dbReference type="HAMAP" id="MF_01382">
    <property type="entry name" value="SecA"/>
    <property type="match status" value="1"/>
</dbReference>
<dbReference type="InterPro" id="IPR014001">
    <property type="entry name" value="Helicase_ATP-bd"/>
</dbReference>
<dbReference type="InterPro" id="IPR027417">
    <property type="entry name" value="P-loop_NTPase"/>
</dbReference>
<dbReference type="InterPro" id="IPR000185">
    <property type="entry name" value="SecA"/>
</dbReference>
<dbReference type="InterPro" id="IPR020937">
    <property type="entry name" value="SecA_CS"/>
</dbReference>
<dbReference type="InterPro" id="IPR011115">
    <property type="entry name" value="SecA_DEAD"/>
</dbReference>
<dbReference type="InterPro" id="IPR014018">
    <property type="entry name" value="SecA_motor_DEAD"/>
</dbReference>
<dbReference type="InterPro" id="IPR011130">
    <property type="entry name" value="SecA_preprotein_X-link_dom"/>
</dbReference>
<dbReference type="InterPro" id="IPR044722">
    <property type="entry name" value="SecA_SF2_C"/>
</dbReference>
<dbReference type="InterPro" id="IPR011116">
    <property type="entry name" value="SecA_Wing/Scaffold"/>
</dbReference>
<dbReference type="InterPro" id="IPR036266">
    <property type="entry name" value="SecA_Wing/Scaffold_sf"/>
</dbReference>
<dbReference type="InterPro" id="IPR036670">
    <property type="entry name" value="SecA_X-link_sf"/>
</dbReference>
<dbReference type="NCBIfam" id="TIGR00963">
    <property type="entry name" value="secA"/>
    <property type="match status" value="1"/>
</dbReference>
<dbReference type="PANTHER" id="PTHR30612:SF0">
    <property type="entry name" value="CHLOROPLAST PROTEIN-TRANSPORTING ATPASE"/>
    <property type="match status" value="1"/>
</dbReference>
<dbReference type="PANTHER" id="PTHR30612">
    <property type="entry name" value="SECA INNER MEMBRANE COMPONENT OF SEC PROTEIN SECRETION SYSTEM"/>
    <property type="match status" value="1"/>
</dbReference>
<dbReference type="Pfam" id="PF21090">
    <property type="entry name" value="P-loop_SecA"/>
    <property type="match status" value="1"/>
</dbReference>
<dbReference type="Pfam" id="PF07517">
    <property type="entry name" value="SecA_DEAD"/>
    <property type="match status" value="1"/>
</dbReference>
<dbReference type="Pfam" id="PF01043">
    <property type="entry name" value="SecA_PP_bind"/>
    <property type="match status" value="1"/>
</dbReference>
<dbReference type="Pfam" id="PF07516">
    <property type="entry name" value="SecA_SW"/>
    <property type="match status" value="1"/>
</dbReference>
<dbReference type="PRINTS" id="PR00906">
    <property type="entry name" value="SECA"/>
</dbReference>
<dbReference type="SMART" id="SM00957">
    <property type="entry name" value="SecA_DEAD"/>
    <property type="match status" value="1"/>
</dbReference>
<dbReference type="SMART" id="SM00958">
    <property type="entry name" value="SecA_PP_bind"/>
    <property type="match status" value="1"/>
</dbReference>
<dbReference type="SUPFAM" id="SSF81886">
    <property type="entry name" value="Helical scaffold and wing domains of SecA"/>
    <property type="match status" value="1"/>
</dbReference>
<dbReference type="SUPFAM" id="SSF52540">
    <property type="entry name" value="P-loop containing nucleoside triphosphate hydrolases"/>
    <property type="match status" value="2"/>
</dbReference>
<dbReference type="SUPFAM" id="SSF81767">
    <property type="entry name" value="Pre-protein crosslinking domain of SecA"/>
    <property type="match status" value="1"/>
</dbReference>
<dbReference type="PROSITE" id="PS01312">
    <property type="entry name" value="SECA"/>
    <property type="match status" value="1"/>
</dbReference>
<dbReference type="PROSITE" id="PS51196">
    <property type="entry name" value="SECA_MOTOR_DEAD"/>
    <property type="match status" value="1"/>
</dbReference>
<accession>Q7UZM1</accession>
<keyword id="KW-0067">ATP-binding</keyword>
<keyword id="KW-0997">Cell inner membrane</keyword>
<keyword id="KW-1003">Cell membrane</keyword>
<keyword id="KW-0963">Cytoplasm</keyword>
<keyword id="KW-0472">Membrane</keyword>
<keyword id="KW-0547">Nucleotide-binding</keyword>
<keyword id="KW-0653">Protein transport</keyword>
<keyword id="KW-0793">Thylakoid</keyword>
<keyword id="KW-1278">Translocase</keyword>
<keyword id="KW-0811">Translocation</keyword>
<keyword id="KW-0813">Transport</keyword>
<protein>
    <recommendedName>
        <fullName evidence="1">Protein translocase subunit SecA</fullName>
        <ecNumber evidence="1">7.4.2.8</ecNumber>
    </recommendedName>
</protein>
<gene>
    <name evidence="1" type="primary">secA</name>
    <name type="ordered locus">PMM1639</name>
</gene>
<proteinExistence type="inferred from homology"/>
<organism>
    <name type="scientific">Prochlorococcus marinus subsp. pastoris (strain CCMP1986 / NIES-2087 / MED4)</name>
    <dbReference type="NCBI Taxonomy" id="59919"/>
    <lineage>
        <taxon>Bacteria</taxon>
        <taxon>Bacillati</taxon>
        <taxon>Cyanobacteriota</taxon>
        <taxon>Cyanophyceae</taxon>
        <taxon>Synechococcales</taxon>
        <taxon>Prochlorococcaceae</taxon>
        <taxon>Prochlorococcus</taxon>
    </lineage>
</organism>
<reference key="1">
    <citation type="journal article" date="2003" name="Nature">
        <title>Genome divergence in two Prochlorococcus ecotypes reflects oceanic niche differentiation.</title>
        <authorList>
            <person name="Rocap G."/>
            <person name="Larimer F.W."/>
            <person name="Lamerdin J.E."/>
            <person name="Malfatti S."/>
            <person name="Chain P."/>
            <person name="Ahlgren N.A."/>
            <person name="Arellano A."/>
            <person name="Coleman M."/>
            <person name="Hauser L."/>
            <person name="Hess W.R."/>
            <person name="Johnson Z.I."/>
            <person name="Land M.L."/>
            <person name="Lindell D."/>
            <person name="Post A.F."/>
            <person name="Regala W."/>
            <person name="Shah M."/>
            <person name="Shaw S.L."/>
            <person name="Steglich C."/>
            <person name="Sullivan M.B."/>
            <person name="Ting C.S."/>
            <person name="Tolonen A."/>
            <person name="Webb E.A."/>
            <person name="Zinser E.R."/>
            <person name="Chisholm S.W."/>
        </authorList>
    </citation>
    <scope>NUCLEOTIDE SEQUENCE [LARGE SCALE GENOMIC DNA]</scope>
    <source>
        <strain>CCMP1986 / NIES-2087 / MED4</strain>
    </source>
</reference>
<feature type="chain" id="PRO_0000318413" description="Protein translocase subunit SecA">
    <location>
        <begin position="1"/>
        <end position="943"/>
    </location>
</feature>
<feature type="region of interest" description="Disordered" evidence="2">
    <location>
        <begin position="534"/>
        <end position="561"/>
    </location>
</feature>
<feature type="binding site" evidence="1">
    <location>
        <position position="90"/>
    </location>
    <ligand>
        <name>ATP</name>
        <dbReference type="ChEBI" id="CHEBI:30616"/>
    </ligand>
</feature>
<feature type="binding site" evidence="1">
    <location>
        <begin position="108"/>
        <end position="112"/>
    </location>
    <ligand>
        <name>ATP</name>
        <dbReference type="ChEBI" id="CHEBI:30616"/>
    </ligand>
</feature>
<feature type="binding site" evidence="1">
    <location>
        <position position="509"/>
    </location>
    <ligand>
        <name>ATP</name>
        <dbReference type="ChEBI" id="CHEBI:30616"/>
    </ligand>
</feature>